<comment type="function">
    <text evidence="1 2">Catalyzes the hydrolysis of the N-glycosidic bond in the first two intermediates of riboflavin biosynthesis, which are highly reactive metabolites, yielding relatively innocuous products. Thus, can divert a surplus of harmful intermediates into relatively harmless products and pre-empt the damage these intermediates would otherwise do. Helps maintain flavin levels. May act on other substrates in vivo. Has no activity against GTP, nucleoside monophosphates or ADP-ribose (PubMed:25431972). Is Required for swarming motility (PubMed:17122336).</text>
</comment>
<comment type="catalytic activity">
    <reaction evidence="2">
        <text>2,5-diamino-6-hydroxy-4-(5-phosphoribosylamino)-pyrimidine + H2O = 2,5,6-triamino-4-hydroxypyrimidine + D-ribose 5-phosphate</text>
        <dbReference type="Rhea" id="RHEA:23436"/>
        <dbReference type="ChEBI" id="CHEBI:15377"/>
        <dbReference type="ChEBI" id="CHEBI:58614"/>
        <dbReference type="ChEBI" id="CHEBI:78346"/>
        <dbReference type="ChEBI" id="CHEBI:137796"/>
    </reaction>
</comment>
<comment type="catalytic activity">
    <reaction evidence="2">
        <text>5-amino-6-(5-phospho-D-ribosylamino)uracil + H2O = 5,6-diaminouracil + D-ribose 5-phosphate</text>
        <dbReference type="Rhea" id="RHEA:55020"/>
        <dbReference type="ChEBI" id="CHEBI:15377"/>
        <dbReference type="ChEBI" id="CHEBI:46252"/>
        <dbReference type="ChEBI" id="CHEBI:58453"/>
        <dbReference type="ChEBI" id="CHEBI:78346"/>
    </reaction>
</comment>
<comment type="biophysicochemical properties">
    <kinetics>
        <KM evidence="2">4.04 mM for 2,5-diamino-6-hydroxy-4-(5-phospho-D-ribosylamino)pyrimidine</KM>
        <KM evidence="2">5.84 mM for 5-amino-6-(5-phospho-D-ribosylamino)uracil</KM>
        <text evidence="2">kcat is 0.006 sec(-1) with 2,5-diamino-6-hydroxy-4-(5-phospho-D-ribosylamino)pyrimidine as substrate. kcat is 0.80 sec(-1) with 5-amino-6-(5-phospho-D-ribosylamino)uracil as substrate.</text>
    </kinetics>
</comment>
<comment type="disruption phenotype">
    <text evidence="1 2">Strongly represses cell swarming but no effect on cell swimming (PubMed:17122336). Cells lacking this gene show significantly reduced FAD and FMN levels (both by 13%) (PubMed:25431972).</text>
</comment>
<comment type="similarity">
    <text evidence="3">Belongs to the YbiA family.</text>
</comment>
<protein>
    <recommendedName>
        <fullName evidence="4">N-glycosidase YbiA</fullName>
        <ecNumber evidence="2">3.2.2.-</ecNumber>
    </recommendedName>
    <alternativeName>
        <fullName evidence="4">Riboflavin biosynthesis intermediates N-glycosidase</fullName>
    </alternativeName>
</protein>
<dbReference type="EC" id="3.2.2.-" evidence="2"/>
<dbReference type="EMBL" id="L02123">
    <property type="protein sequence ID" value="AAA53654.1"/>
    <property type="molecule type" value="Genomic_DNA"/>
</dbReference>
<dbReference type="EMBL" id="U00096">
    <property type="protein sequence ID" value="AAC73885.1"/>
    <property type="molecule type" value="Genomic_DNA"/>
</dbReference>
<dbReference type="EMBL" id="AP009048">
    <property type="protein sequence ID" value="BAA35458.1"/>
    <property type="molecule type" value="Genomic_DNA"/>
</dbReference>
<dbReference type="PIR" id="F64816">
    <property type="entry name" value="F64816"/>
</dbReference>
<dbReference type="RefSeq" id="NP_415319.1">
    <property type="nucleotide sequence ID" value="NC_000913.3"/>
</dbReference>
<dbReference type="RefSeq" id="WP_001145126.1">
    <property type="nucleotide sequence ID" value="NZ_SSZK01000002.1"/>
</dbReference>
<dbReference type="PDB" id="2B3W">
    <property type="method" value="NMR"/>
    <property type="chains" value="A=1-160"/>
</dbReference>
<dbReference type="PDBsum" id="2B3W"/>
<dbReference type="BMRB" id="P30176"/>
<dbReference type="SMR" id="P30176"/>
<dbReference type="BioGRID" id="4259963">
    <property type="interactions" value="32"/>
</dbReference>
<dbReference type="DIP" id="DIP-11424N"/>
<dbReference type="FunCoup" id="P30176">
    <property type="interactions" value="208"/>
</dbReference>
<dbReference type="IntAct" id="P30176">
    <property type="interactions" value="15"/>
</dbReference>
<dbReference type="STRING" id="511145.b0798"/>
<dbReference type="PaxDb" id="511145-b0798"/>
<dbReference type="EnsemblBacteria" id="AAC73885">
    <property type="protein sequence ID" value="AAC73885"/>
    <property type="gene ID" value="b0798"/>
</dbReference>
<dbReference type="GeneID" id="945426"/>
<dbReference type="KEGG" id="ecj:JW0783"/>
<dbReference type="KEGG" id="eco:b0798"/>
<dbReference type="PATRIC" id="fig|511145.12.peg.825"/>
<dbReference type="EchoBASE" id="EB1539"/>
<dbReference type="eggNOG" id="COG3236">
    <property type="taxonomic scope" value="Bacteria"/>
</dbReference>
<dbReference type="HOGENOM" id="CLU_084247_3_1_6"/>
<dbReference type="InParanoid" id="P30176"/>
<dbReference type="OMA" id="WWPTSEH"/>
<dbReference type="OrthoDB" id="9793111at2"/>
<dbReference type="PhylomeDB" id="P30176"/>
<dbReference type="BioCyc" id="EcoCyc:EG11579-MONOMER"/>
<dbReference type="BioCyc" id="MetaCyc:EG11579-MONOMER"/>
<dbReference type="EvolutionaryTrace" id="P30176"/>
<dbReference type="PRO" id="PR:P30176"/>
<dbReference type="Proteomes" id="UP000000625">
    <property type="component" value="Chromosome"/>
</dbReference>
<dbReference type="GO" id="GO:0016799">
    <property type="term" value="F:hydrolase activity, hydrolyzing N-glycosyl compounds"/>
    <property type="evidence" value="ECO:0000314"/>
    <property type="project" value="UniProtKB"/>
</dbReference>
<dbReference type="GO" id="GO:0071978">
    <property type="term" value="P:bacterial-type flagellum-dependent swarming motility"/>
    <property type="evidence" value="ECO:0000315"/>
    <property type="project" value="EcoCyc"/>
</dbReference>
<dbReference type="GO" id="GO:1901135">
    <property type="term" value="P:carbohydrate derivative metabolic process"/>
    <property type="evidence" value="ECO:0000314"/>
    <property type="project" value="UniProtKB"/>
</dbReference>
<dbReference type="GO" id="GO:0034656">
    <property type="term" value="P:nucleobase-containing small molecule catabolic process"/>
    <property type="evidence" value="ECO:0000314"/>
    <property type="project" value="EcoCyc"/>
</dbReference>
<dbReference type="GO" id="GO:0009231">
    <property type="term" value="P:riboflavin biosynthetic process"/>
    <property type="evidence" value="ECO:0000315"/>
    <property type="project" value="EcoCyc"/>
</dbReference>
<dbReference type="CDD" id="cd15457">
    <property type="entry name" value="NADAR"/>
    <property type="match status" value="1"/>
</dbReference>
<dbReference type="FunFam" id="1.10.357.40:FF:000001">
    <property type="entry name" value="Swarming motility protein ybiA"/>
    <property type="match status" value="1"/>
</dbReference>
<dbReference type="Gene3D" id="1.10.357.40">
    <property type="entry name" value="YbiA-like"/>
    <property type="match status" value="1"/>
</dbReference>
<dbReference type="InterPro" id="IPR012816">
    <property type="entry name" value="NADAR"/>
</dbReference>
<dbReference type="InterPro" id="IPR037238">
    <property type="entry name" value="YbiA-like_sf"/>
</dbReference>
<dbReference type="NCBIfam" id="TIGR02464">
    <property type="entry name" value="ribofla_fusion"/>
    <property type="match status" value="1"/>
</dbReference>
<dbReference type="Pfam" id="PF08719">
    <property type="entry name" value="NADAR"/>
    <property type="match status" value="1"/>
</dbReference>
<dbReference type="SUPFAM" id="SSF143990">
    <property type="entry name" value="YbiA-like"/>
    <property type="match status" value="1"/>
</dbReference>
<feature type="chain" id="PRO_0000168724" description="N-glycosidase YbiA">
    <location>
        <begin position="1"/>
        <end position="160"/>
    </location>
</feature>
<feature type="mutagenesis site" description="Loss of enzymatic activity." evidence="2">
    <original>E</original>
    <variation>A</variation>
    <location>
        <position position="48"/>
    </location>
</feature>
<feature type="mutagenesis site" description="Large decrease in enzymatic activity." evidence="2">
    <original>W</original>
    <variation>A</variation>
    <location>
        <position position="89"/>
    </location>
</feature>
<feature type="mutagenesis site" description="Loss of enzymatic activity." evidence="2">
    <original>D</original>
    <variation>A</variation>
    <location>
        <position position="130"/>
    </location>
</feature>
<feature type="mutagenesis site" description="Loss of enzymatic activity." evidence="2">
    <original>W</original>
    <variation>A</variation>
    <location>
        <position position="133"/>
    </location>
</feature>
<feature type="strand" evidence="5">
    <location>
        <begin position="7"/>
        <end position="10"/>
    </location>
</feature>
<feature type="strand" evidence="5">
    <location>
        <begin position="13"/>
        <end position="19"/>
    </location>
</feature>
<feature type="helix" evidence="5">
    <location>
        <begin position="25"/>
        <end position="27"/>
    </location>
</feature>
<feature type="strand" evidence="5">
    <location>
        <begin position="37"/>
        <end position="39"/>
    </location>
</feature>
<feature type="strand" evidence="5">
    <location>
        <begin position="42"/>
        <end position="46"/>
    </location>
</feature>
<feature type="helix" evidence="5">
    <location>
        <begin position="47"/>
        <end position="55"/>
    </location>
</feature>
<feature type="helix" evidence="5">
    <location>
        <begin position="59"/>
        <end position="67"/>
    </location>
</feature>
<feature type="helix" evidence="5">
    <location>
        <begin position="71"/>
        <end position="78"/>
    </location>
</feature>
<feature type="strand" evidence="5">
    <location>
        <begin position="81"/>
        <end position="83"/>
    </location>
</feature>
<feature type="helix" evidence="5">
    <location>
        <begin position="89"/>
        <end position="106"/>
    </location>
</feature>
<feature type="helix" evidence="5">
    <location>
        <begin position="109"/>
        <end position="117"/>
    </location>
</feature>
<feature type="turn" evidence="5">
    <location>
        <begin position="118"/>
        <end position="120"/>
    </location>
</feature>
<feature type="strand" evidence="5">
    <location>
        <begin position="121"/>
        <end position="125"/>
    </location>
</feature>
<feature type="strand" evidence="5">
    <location>
        <begin position="132"/>
        <end position="134"/>
    </location>
</feature>
<feature type="turn" evidence="5">
    <location>
        <begin position="136"/>
        <end position="139"/>
    </location>
</feature>
<feature type="helix" evidence="5">
    <location>
        <begin position="144"/>
        <end position="160"/>
    </location>
</feature>
<evidence type="ECO:0000269" key="1">
    <source>
    </source>
</evidence>
<evidence type="ECO:0000269" key="2">
    <source>
    </source>
</evidence>
<evidence type="ECO:0000305" key="3"/>
<evidence type="ECO:0000305" key="4">
    <source>
    </source>
</evidence>
<evidence type="ECO:0007829" key="5">
    <source>
        <dbReference type="PDB" id="2B3W"/>
    </source>
</evidence>
<gene>
    <name type="primary">ybiA</name>
    <name type="ordered locus">b0798</name>
    <name type="ordered locus">JW0783</name>
</gene>
<keyword id="KW-0002">3D-structure</keyword>
<keyword id="KW-0326">Glycosidase</keyword>
<keyword id="KW-0378">Hydrolase</keyword>
<keyword id="KW-1185">Reference proteome</keyword>
<accession>P30176</accession>
<name>RIBX_ECOLI</name>
<sequence length="160" mass="18669">MPVRAQRIQHVMQDTIINFYSTSDDYGDFSNFAAWPIKVDGKTWPTSEHYFQAQKFLDEKYREEIRRVSSPMVAARMGRDRSKPLRKNWESVKEQVMRKALRAKFEQHAELRALLLATAPAKLVEHTENDAYWGDGGHGKGKNRLGYLLMELREQLAIEK</sequence>
<organism>
    <name type="scientific">Escherichia coli (strain K12)</name>
    <dbReference type="NCBI Taxonomy" id="83333"/>
    <lineage>
        <taxon>Bacteria</taxon>
        <taxon>Pseudomonadati</taxon>
        <taxon>Pseudomonadota</taxon>
        <taxon>Gammaproteobacteria</taxon>
        <taxon>Enterobacterales</taxon>
        <taxon>Enterobacteriaceae</taxon>
        <taxon>Escherichia</taxon>
    </lineage>
</organism>
<reference key="1">
    <citation type="journal article" date="1994" name="Jpn. J. Genet.">
        <title>Structural analysis of the rhlE gene of Escherichia coli.</title>
        <authorList>
            <person name="Ohmori H."/>
        </authorList>
    </citation>
    <scope>NUCLEOTIDE SEQUENCE [GENOMIC DNA]</scope>
    <source>
        <strain>K12 / W3110 / ATCC 27325 / DSM 5911</strain>
    </source>
</reference>
<reference key="2">
    <citation type="journal article" date="1996" name="DNA Res.">
        <title>A 718-kb DNA sequence of the Escherichia coli K-12 genome corresponding to the 12.7-28.0 min region on the linkage map.</title>
        <authorList>
            <person name="Oshima T."/>
            <person name="Aiba H."/>
            <person name="Baba T."/>
            <person name="Fujita K."/>
            <person name="Hayashi K."/>
            <person name="Honjo A."/>
            <person name="Ikemoto K."/>
            <person name="Inada T."/>
            <person name="Itoh T."/>
            <person name="Kajihara M."/>
            <person name="Kanai K."/>
            <person name="Kashimoto K."/>
            <person name="Kimura S."/>
            <person name="Kitagawa M."/>
            <person name="Makino K."/>
            <person name="Masuda S."/>
            <person name="Miki T."/>
            <person name="Mizobuchi K."/>
            <person name="Mori H."/>
            <person name="Motomura K."/>
            <person name="Nakamura Y."/>
            <person name="Nashimoto H."/>
            <person name="Nishio Y."/>
            <person name="Saito N."/>
            <person name="Sampei G."/>
            <person name="Seki Y."/>
            <person name="Tagami H."/>
            <person name="Takemoto K."/>
            <person name="Wada C."/>
            <person name="Yamamoto Y."/>
            <person name="Yano M."/>
            <person name="Horiuchi T."/>
        </authorList>
    </citation>
    <scope>NUCLEOTIDE SEQUENCE [LARGE SCALE GENOMIC DNA]</scope>
    <source>
        <strain>K12 / W3110 / ATCC 27325 / DSM 5911</strain>
    </source>
</reference>
<reference key="3">
    <citation type="journal article" date="1997" name="Science">
        <title>The complete genome sequence of Escherichia coli K-12.</title>
        <authorList>
            <person name="Blattner F.R."/>
            <person name="Plunkett G. III"/>
            <person name="Bloch C.A."/>
            <person name="Perna N.T."/>
            <person name="Burland V."/>
            <person name="Riley M."/>
            <person name="Collado-Vides J."/>
            <person name="Glasner J.D."/>
            <person name="Rode C.K."/>
            <person name="Mayhew G.F."/>
            <person name="Gregor J."/>
            <person name="Davis N.W."/>
            <person name="Kirkpatrick H.A."/>
            <person name="Goeden M.A."/>
            <person name="Rose D.J."/>
            <person name="Mau B."/>
            <person name="Shao Y."/>
        </authorList>
    </citation>
    <scope>NUCLEOTIDE SEQUENCE [LARGE SCALE GENOMIC DNA]</scope>
    <source>
        <strain>K12 / MG1655 / ATCC 47076</strain>
    </source>
</reference>
<reference key="4">
    <citation type="journal article" date="2006" name="Mol. Syst. Biol.">
        <title>Highly accurate genome sequences of Escherichia coli K-12 strains MG1655 and W3110.</title>
        <authorList>
            <person name="Hayashi K."/>
            <person name="Morooka N."/>
            <person name="Yamamoto Y."/>
            <person name="Fujita K."/>
            <person name="Isono K."/>
            <person name="Choi S."/>
            <person name="Ohtsubo E."/>
            <person name="Baba T."/>
            <person name="Wanner B.L."/>
            <person name="Mori H."/>
            <person name="Horiuchi T."/>
        </authorList>
    </citation>
    <scope>NUCLEOTIDE SEQUENCE [LARGE SCALE GENOMIC DNA]</scope>
    <source>
        <strain>K12 / W3110 / ATCC 27325 / DSM 5911</strain>
    </source>
</reference>
<reference key="5">
    <citation type="journal article" date="2007" name="J. Bacteriol.">
        <title>Genome-wide screening of genes required for swarming motility in Escherichia coli K-12.</title>
        <authorList>
            <person name="Inoue T."/>
            <person name="Shingaki R."/>
            <person name="Hirose S."/>
            <person name="Waki K."/>
            <person name="Mori H."/>
            <person name="Fukui K."/>
        </authorList>
    </citation>
    <scope>FUNCTION IN SWARMING MOTILITY</scope>
    <scope>DISRUPTION PHENOTYPE</scope>
    <source>
        <strain>K12 / BW25113</strain>
    </source>
</reference>
<reference key="6">
    <citation type="journal article" date="2015" name="Biochem. J.">
        <title>A directed-overflow and damage-control N-glycosidase in riboflavin biosynthesis.</title>
        <authorList>
            <person name="Frelin O."/>
            <person name="Huang L."/>
            <person name="Hasnain G."/>
            <person name="Jeffryes J.G."/>
            <person name="Ziemak M.J."/>
            <person name="Rocca J.R."/>
            <person name="Wang B."/>
            <person name="Rice J."/>
            <person name="Roje S."/>
            <person name="Yurgel S.N."/>
            <person name="Gregory J.F. III"/>
            <person name="Edison A.S."/>
            <person name="Henry C.S."/>
            <person name="de Crecy-Lagard V."/>
            <person name="Hanson A.D."/>
        </authorList>
    </citation>
    <scope>FUNCTION</scope>
    <scope>CATALYTIC ACTIVITY</scope>
    <scope>SUBSTRATE SPECIFICITY</scope>
    <scope>BIOPHYSICOCHEMICAL PROPERTIES</scope>
    <scope>DISRUPTION PHENOTYPE</scope>
    <scope>MUTAGENESIS OF GLU-48; TRP-89; ASP-130 AND TRP-133</scope>
</reference>
<reference key="7">
    <citation type="submission" date="2005-11" db="PDB data bank">
        <title>NMR structure of the E.coli protein ybiA, Northeast structural genomics target ET24.</title>
        <authorList>
            <consortium name="Northeast structural genomics consortium (NESG)"/>
        </authorList>
    </citation>
    <scope>STRUCTURE BY NMR</scope>
</reference>
<proteinExistence type="evidence at protein level"/>